<evidence type="ECO:0000255" key="1">
    <source>
        <dbReference type="HAMAP-Rule" id="MF_01337"/>
    </source>
</evidence>
<evidence type="ECO:0000305" key="2"/>
<dbReference type="EMBL" id="CP000538">
    <property type="protein sequence ID" value="EAQ72916.1"/>
    <property type="molecule type" value="Genomic_DNA"/>
</dbReference>
<dbReference type="RefSeq" id="WP_002785535.1">
    <property type="nucleotide sequence ID" value="NC_008787.1"/>
</dbReference>
<dbReference type="SMR" id="A1W1U4"/>
<dbReference type="KEGG" id="cjj:CJJ81176_1688"/>
<dbReference type="eggNOG" id="COG0256">
    <property type="taxonomic scope" value="Bacteria"/>
</dbReference>
<dbReference type="HOGENOM" id="CLU_098841_0_1_7"/>
<dbReference type="Proteomes" id="UP000000646">
    <property type="component" value="Chromosome"/>
</dbReference>
<dbReference type="GO" id="GO:0022625">
    <property type="term" value="C:cytosolic large ribosomal subunit"/>
    <property type="evidence" value="ECO:0007669"/>
    <property type="project" value="TreeGrafter"/>
</dbReference>
<dbReference type="GO" id="GO:0008097">
    <property type="term" value="F:5S rRNA binding"/>
    <property type="evidence" value="ECO:0007669"/>
    <property type="project" value="TreeGrafter"/>
</dbReference>
<dbReference type="GO" id="GO:0003735">
    <property type="term" value="F:structural constituent of ribosome"/>
    <property type="evidence" value="ECO:0007669"/>
    <property type="project" value="InterPro"/>
</dbReference>
<dbReference type="GO" id="GO:0006412">
    <property type="term" value="P:translation"/>
    <property type="evidence" value="ECO:0007669"/>
    <property type="project" value="UniProtKB-UniRule"/>
</dbReference>
<dbReference type="CDD" id="cd00432">
    <property type="entry name" value="Ribosomal_L18_L5e"/>
    <property type="match status" value="1"/>
</dbReference>
<dbReference type="Gene3D" id="3.30.420.100">
    <property type="match status" value="1"/>
</dbReference>
<dbReference type="HAMAP" id="MF_01337_B">
    <property type="entry name" value="Ribosomal_uL18_B"/>
    <property type="match status" value="1"/>
</dbReference>
<dbReference type="InterPro" id="IPR004389">
    <property type="entry name" value="Ribosomal_uL18_bac-type"/>
</dbReference>
<dbReference type="InterPro" id="IPR005484">
    <property type="entry name" value="Ribosomal_uL18_bac/euk"/>
</dbReference>
<dbReference type="NCBIfam" id="TIGR00060">
    <property type="entry name" value="L18_bact"/>
    <property type="match status" value="1"/>
</dbReference>
<dbReference type="PANTHER" id="PTHR12899">
    <property type="entry name" value="39S RIBOSOMAL PROTEIN L18, MITOCHONDRIAL"/>
    <property type="match status" value="1"/>
</dbReference>
<dbReference type="PANTHER" id="PTHR12899:SF3">
    <property type="entry name" value="LARGE RIBOSOMAL SUBUNIT PROTEIN UL18M"/>
    <property type="match status" value="1"/>
</dbReference>
<dbReference type="Pfam" id="PF00861">
    <property type="entry name" value="Ribosomal_L18p"/>
    <property type="match status" value="1"/>
</dbReference>
<dbReference type="SUPFAM" id="SSF53137">
    <property type="entry name" value="Translational machinery components"/>
    <property type="match status" value="1"/>
</dbReference>
<gene>
    <name evidence="1" type="primary">rplR</name>
    <name type="ordered locus">CJJ81176_1688</name>
</gene>
<keyword id="KW-0687">Ribonucleoprotein</keyword>
<keyword id="KW-0689">Ribosomal protein</keyword>
<keyword id="KW-0694">RNA-binding</keyword>
<keyword id="KW-0699">rRNA-binding</keyword>
<organism>
    <name type="scientific">Campylobacter jejuni subsp. jejuni serotype O:23/36 (strain 81-176)</name>
    <dbReference type="NCBI Taxonomy" id="354242"/>
    <lineage>
        <taxon>Bacteria</taxon>
        <taxon>Pseudomonadati</taxon>
        <taxon>Campylobacterota</taxon>
        <taxon>Epsilonproteobacteria</taxon>
        <taxon>Campylobacterales</taxon>
        <taxon>Campylobacteraceae</taxon>
        <taxon>Campylobacter</taxon>
    </lineage>
</organism>
<protein>
    <recommendedName>
        <fullName evidence="1">Large ribosomal subunit protein uL18</fullName>
    </recommendedName>
    <alternativeName>
        <fullName evidence="2">50S ribosomal protein L18</fullName>
    </alternativeName>
</protein>
<feature type="chain" id="PRO_1000053009" description="Large ribosomal subunit protein uL18">
    <location>
        <begin position="1"/>
        <end position="118"/>
    </location>
</feature>
<accession>A1W1U4</accession>
<name>RL18_CAMJJ</name>
<reference key="1">
    <citation type="submission" date="2006-12" db="EMBL/GenBank/DDBJ databases">
        <authorList>
            <person name="Fouts D.E."/>
            <person name="Nelson K.E."/>
            <person name="Sebastian Y."/>
        </authorList>
    </citation>
    <scope>NUCLEOTIDE SEQUENCE [LARGE SCALE GENOMIC DNA]</scope>
    <source>
        <strain>81-176</strain>
    </source>
</reference>
<proteinExistence type="inferred from homology"/>
<comment type="function">
    <text evidence="1">This is one of the proteins that bind and probably mediate the attachment of the 5S RNA into the large ribosomal subunit, where it forms part of the central protuberance.</text>
</comment>
<comment type="subunit">
    <text evidence="1">Part of the 50S ribosomal subunit; part of the 5S rRNA/L5/L18/L25 subcomplex. Contacts the 5S and 23S rRNAs.</text>
</comment>
<comment type="similarity">
    <text evidence="1">Belongs to the universal ribosomal protein uL18 family.</text>
</comment>
<sequence>MRANVLKRKLTLRIKRKKRIRAKISGCENFPRISVFKSNRTLYIQAIDDVKAVTLAAVDGRKLGVKANKEGAKKIAAEFAKTLKAKKIEQAVFDRNGYVYHGVIAALAESLRENGIRL</sequence>